<gene>
    <name type="primary">ssuA</name>
    <name type="synonym">ycbO</name>
    <name type="ordered locus">b0936</name>
    <name type="ordered locus">JW0919</name>
</gene>
<protein>
    <recommendedName>
        <fullName>Putative aliphatic sulfonates-binding protein</fullName>
    </recommendedName>
</protein>
<name>SSUA_ECOLI</name>
<evidence type="ECO:0000255" key="1"/>
<evidence type="ECO:0000305" key="2"/>
<evidence type="ECO:0007829" key="3">
    <source>
        <dbReference type="PDB" id="2X26"/>
    </source>
</evidence>
<proteinExistence type="evidence at protein level"/>
<organism>
    <name type="scientific">Escherichia coli (strain K12)</name>
    <dbReference type="NCBI Taxonomy" id="83333"/>
    <lineage>
        <taxon>Bacteria</taxon>
        <taxon>Pseudomonadati</taxon>
        <taxon>Pseudomonadota</taxon>
        <taxon>Gammaproteobacteria</taxon>
        <taxon>Enterobacterales</taxon>
        <taxon>Enterobacteriaceae</taxon>
        <taxon>Escherichia</taxon>
    </lineage>
</organism>
<accession>P75853</accession>
<accession>Q9R7Q5</accession>
<feature type="signal peptide" evidence="1">
    <location>
        <begin position="1"/>
        <end position="21"/>
    </location>
</feature>
<feature type="chain" id="PRO_0000031864" description="Putative aliphatic sulfonates-binding protein">
    <location>
        <begin position="22"/>
        <end position="319"/>
    </location>
</feature>
<feature type="strand" evidence="3">
    <location>
        <begin position="27"/>
        <end position="33"/>
    </location>
</feature>
<feature type="helix" evidence="3">
    <location>
        <begin position="38"/>
        <end position="45"/>
    </location>
</feature>
<feature type="helix" evidence="3">
    <location>
        <begin position="48"/>
        <end position="52"/>
    </location>
</feature>
<feature type="strand" evidence="3">
    <location>
        <begin position="56"/>
        <end position="62"/>
    </location>
</feature>
<feature type="helix" evidence="3">
    <location>
        <begin position="66"/>
        <end position="75"/>
    </location>
</feature>
<feature type="strand" evidence="3">
    <location>
        <begin position="79"/>
        <end position="83"/>
    </location>
</feature>
<feature type="helix" evidence="3">
    <location>
        <begin position="86"/>
        <end position="93"/>
    </location>
</feature>
<feature type="strand" evidence="3">
    <location>
        <begin position="98"/>
        <end position="104"/>
    </location>
</feature>
<feature type="helix" evidence="3">
    <location>
        <begin position="108"/>
        <end position="110"/>
    </location>
</feature>
<feature type="strand" evidence="3">
    <location>
        <begin position="111"/>
        <end position="116"/>
    </location>
</feature>
<feature type="helix" evidence="3">
    <location>
        <begin position="124"/>
        <end position="127"/>
    </location>
</feature>
<feature type="strand" evidence="3">
    <location>
        <begin position="130"/>
        <end position="134"/>
    </location>
</feature>
<feature type="helix" evidence="3">
    <location>
        <begin position="139"/>
        <end position="150"/>
    </location>
</feature>
<feature type="helix" evidence="3">
    <location>
        <begin position="155"/>
        <end position="157"/>
    </location>
</feature>
<feature type="strand" evidence="3">
    <location>
        <begin position="158"/>
        <end position="162"/>
    </location>
</feature>
<feature type="helix" evidence="3">
    <location>
        <begin position="165"/>
        <end position="173"/>
    </location>
</feature>
<feature type="strand" evidence="3">
    <location>
        <begin position="176"/>
        <end position="183"/>
    </location>
</feature>
<feature type="helix" evidence="3">
    <location>
        <begin position="186"/>
        <end position="193"/>
    </location>
</feature>
<feature type="strand" evidence="3">
    <location>
        <begin position="194"/>
        <end position="202"/>
    </location>
</feature>
<feature type="strand" evidence="3">
    <location>
        <begin position="210"/>
        <end position="215"/>
    </location>
</feature>
<feature type="helix" evidence="3">
    <location>
        <begin position="216"/>
        <end position="221"/>
    </location>
</feature>
<feature type="helix" evidence="3">
    <location>
        <begin position="223"/>
        <end position="242"/>
    </location>
</feature>
<feature type="helix" evidence="3">
    <location>
        <begin position="244"/>
        <end position="255"/>
    </location>
</feature>
<feature type="helix" evidence="3">
    <location>
        <begin position="259"/>
        <end position="267"/>
    </location>
</feature>
<feature type="helix" evidence="3">
    <location>
        <begin position="279"/>
        <end position="294"/>
    </location>
</feature>
<feature type="strand" evidence="3">
    <location>
        <begin position="297"/>
        <end position="300"/>
    </location>
</feature>
<feature type="helix" evidence="3">
    <location>
        <begin position="304"/>
        <end position="307"/>
    </location>
</feature>
<reference key="1">
    <citation type="journal article" date="1999" name="J. Biol. Chem.">
        <title>The Escherichia coli ssuEADCB gene cluster is required for the utilization of sulfur from aliphatic sulfonates and is regulated by the transcriptional activator Cbl.</title>
        <authorList>
            <person name="Van der Ploeg J.R."/>
            <person name="Iwanicka-Nowicka R."/>
            <person name="Bykowski T."/>
            <person name="Hryniewicz M.M."/>
            <person name="Leisinger T."/>
        </authorList>
    </citation>
    <scope>NUCLEOTIDE SEQUENCE [GENOMIC DNA]</scope>
    <source>
        <strain>K12</strain>
    </source>
</reference>
<reference key="2">
    <citation type="journal article" date="1996" name="DNA Res.">
        <title>A 718-kb DNA sequence of the Escherichia coli K-12 genome corresponding to the 12.7-28.0 min region on the linkage map.</title>
        <authorList>
            <person name="Oshima T."/>
            <person name="Aiba H."/>
            <person name="Baba T."/>
            <person name="Fujita K."/>
            <person name="Hayashi K."/>
            <person name="Honjo A."/>
            <person name="Ikemoto K."/>
            <person name="Inada T."/>
            <person name="Itoh T."/>
            <person name="Kajihara M."/>
            <person name="Kanai K."/>
            <person name="Kashimoto K."/>
            <person name="Kimura S."/>
            <person name="Kitagawa M."/>
            <person name="Makino K."/>
            <person name="Masuda S."/>
            <person name="Miki T."/>
            <person name="Mizobuchi K."/>
            <person name="Mori H."/>
            <person name="Motomura K."/>
            <person name="Nakamura Y."/>
            <person name="Nashimoto H."/>
            <person name="Nishio Y."/>
            <person name="Saito N."/>
            <person name="Sampei G."/>
            <person name="Seki Y."/>
            <person name="Tagami H."/>
            <person name="Takemoto K."/>
            <person name="Wada C."/>
            <person name="Yamamoto Y."/>
            <person name="Yano M."/>
            <person name="Horiuchi T."/>
        </authorList>
    </citation>
    <scope>NUCLEOTIDE SEQUENCE [LARGE SCALE GENOMIC DNA]</scope>
    <source>
        <strain>K12 / W3110 / ATCC 27325 / DSM 5911</strain>
    </source>
</reference>
<reference key="3">
    <citation type="journal article" date="1997" name="Science">
        <title>The complete genome sequence of Escherichia coli K-12.</title>
        <authorList>
            <person name="Blattner F.R."/>
            <person name="Plunkett G. III"/>
            <person name="Bloch C.A."/>
            <person name="Perna N.T."/>
            <person name="Burland V."/>
            <person name="Riley M."/>
            <person name="Collado-Vides J."/>
            <person name="Glasner J.D."/>
            <person name="Rode C.K."/>
            <person name="Mayhew G.F."/>
            <person name="Gregor J."/>
            <person name="Davis N.W."/>
            <person name="Kirkpatrick H.A."/>
            <person name="Goeden M.A."/>
            <person name="Rose D.J."/>
            <person name="Mau B."/>
            <person name="Shao Y."/>
        </authorList>
    </citation>
    <scope>NUCLEOTIDE SEQUENCE [LARGE SCALE GENOMIC DNA]</scope>
    <source>
        <strain>K12 / MG1655 / ATCC 47076</strain>
    </source>
</reference>
<reference key="4">
    <citation type="journal article" date="2006" name="Mol. Syst. Biol.">
        <title>Highly accurate genome sequences of Escherichia coli K-12 strains MG1655 and W3110.</title>
        <authorList>
            <person name="Hayashi K."/>
            <person name="Morooka N."/>
            <person name="Yamamoto Y."/>
            <person name="Fujita K."/>
            <person name="Isono K."/>
            <person name="Choi S."/>
            <person name="Ohtsubo E."/>
            <person name="Baba T."/>
            <person name="Wanner B.L."/>
            <person name="Mori H."/>
            <person name="Horiuchi T."/>
        </authorList>
    </citation>
    <scope>NUCLEOTIDE SEQUENCE [LARGE SCALE GENOMIC DNA]</scope>
    <source>
        <strain>K12 / W3110 / ATCC 27325 / DSM 5911</strain>
    </source>
</reference>
<comment type="function">
    <text>Part of a binding-protein-dependent transport system for aliphatic sulfonates. Putative binding protein.</text>
</comment>
<comment type="subcellular location">
    <subcellularLocation>
        <location evidence="2">Periplasm</location>
    </subcellularLocation>
</comment>
<comment type="similarity">
    <text evidence="2">Belongs to the bacterial solute-binding protein SsuA/TauA family.</text>
</comment>
<sequence length="319" mass="34558">MRNIIKLALAGLLSVSTFAVAAESSPEALRIGYQKGSIGMVLAKSHQLLEKRYPESKISWVEFPAGPQMLEALNVGSIDLGSTGDIPPIFAQAAGADLVYVGVEPPKPKAEVILVAENSPIKTVADLKGHKVAFQKGSSSHNLLLRALRQAGLKFTDIQPTYLTPADARAAFQQGNVDAWAIWDPYYSAALLQGGVRVLKDGTDLNQTGSFYLAARPYAEKNGAFIQGVLATFSEADALTRSQREQSIALLAKTMGLPAPVIASYLDHRPPTTIKPVNAEVAALQQQTADLFYENRLVPKKVDIRQRIWQPTQLEGKQL</sequence>
<dbReference type="EMBL" id="AJ237695">
    <property type="protein sequence ID" value="CAB40390.1"/>
    <property type="molecule type" value="Genomic_DNA"/>
</dbReference>
<dbReference type="EMBL" id="U00096">
    <property type="protein sequence ID" value="AAC74022.2"/>
    <property type="molecule type" value="Genomic_DNA"/>
</dbReference>
<dbReference type="EMBL" id="AP009048">
    <property type="protein sequence ID" value="BAA35691.2"/>
    <property type="molecule type" value="Genomic_DNA"/>
</dbReference>
<dbReference type="PIR" id="G64833">
    <property type="entry name" value="G64833"/>
</dbReference>
<dbReference type="RefSeq" id="NP_415456.4">
    <property type="nucleotide sequence ID" value="NC_000913.3"/>
</dbReference>
<dbReference type="RefSeq" id="WP_001244308.1">
    <property type="nucleotide sequence ID" value="NZ_SSZK01000002.1"/>
</dbReference>
<dbReference type="PDB" id="2X26">
    <property type="method" value="X-ray"/>
    <property type="resolution" value="1.75 A"/>
    <property type="chains" value="A/B=25-319"/>
</dbReference>
<dbReference type="PDBsum" id="2X26"/>
<dbReference type="SMR" id="P75853"/>
<dbReference type="BioGRID" id="4260023">
    <property type="interactions" value="11"/>
</dbReference>
<dbReference type="ComplexPortal" id="CPX-4313">
    <property type="entry name" value="Aliphatic sulfonate ABC transporter complex"/>
</dbReference>
<dbReference type="FunCoup" id="P75853">
    <property type="interactions" value="353"/>
</dbReference>
<dbReference type="IntAct" id="P75853">
    <property type="interactions" value="1"/>
</dbReference>
<dbReference type="STRING" id="511145.b0936"/>
<dbReference type="TCDB" id="3.A.1.17.10">
    <property type="family name" value="the atp-binding cassette (abc) superfamily"/>
</dbReference>
<dbReference type="PaxDb" id="511145-b0936"/>
<dbReference type="EnsemblBacteria" id="AAC74022">
    <property type="protein sequence ID" value="AAC74022"/>
    <property type="gene ID" value="b0936"/>
</dbReference>
<dbReference type="GeneID" id="945560"/>
<dbReference type="KEGG" id="ecj:JW0919"/>
<dbReference type="KEGG" id="eco:b0936"/>
<dbReference type="KEGG" id="ecoc:C3026_05745"/>
<dbReference type="PATRIC" id="fig|1411691.4.peg.1338"/>
<dbReference type="EchoBASE" id="EB3471"/>
<dbReference type="eggNOG" id="COG0715">
    <property type="taxonomic scope" value="Bacteria"/>
</dbReference>
<dbReference type="HOGENOM" id="CLU_028871_2_0_6"/>
<dbReference type="InParanoid" id="P75853"/>
<dbReference type="OMA" id="KTADFQY"/>
<dbReference type="OrthoDB" id="7374754at2"/>
<dbReference type="PhylomeDB" id="P75853"/>
<dbReference type="BioCyc" id="EcoCyc:G6478-MONOMER"/>
<dbReference type="BioCyc" id="MetaCyc:G6478-MONOMER"/>
<dbReference type="EvolutionaryTrace" id="P75853"/>
<dbReference type="PRO" id="PR:P75853"/>
<dbReference type="Proteomes" id="UP000000625">
    <property type="component" value="Chromosome"/>
</dbReference>
<dbReference type="GO" id="GO:0055052">
    <property type="term" value="C:ATP-binding cassette (ABC) transporter complex, substrate-binding subunit-containing"/>
    <property type="evidence" value="ECO:0000303"/>
    <property type="project" value="ComplexPortal"/>
</dbReference>
<dbReference type="GO" id="GO:0016020">
    <property type="term" value="C:membrane"/>
    <property type="evidence" value="ECO:0000303"/>
    <property type="project" value="ComplexPortal"/>
</dbReference>
<dbReference type="GO" id="GO:0042597">
    <property type="term" value="C:periplasmic space"/>
    <property type="evidence" value="ECO:0007669"/>
    <property type="project" value="UniProtKB-SubCell"/>
</dbReference>
<dbReference type="GO" id="GO:0042959">
    <property type="term" value="F:ABC-type alkanesulfonate transporter transporter activity"/>
    <property type="evidence" value="ECO:0000269"/>
    <property type="project" value="EcoCyc"/>
</dbReference>
<dbReference type="GO" id="GO:0042918">
    <property type="term" value="P:alkanesulfonate transmembrane transport"/>
    <property type="evidence" value="ECO:0000269"/>
    <property type="project" value="EcoCyc"/>
</dbReference>
<dbReference type="GO" id="GO:0010438">
    <property type="term" value="P:cellular response to sulfur starvation"/>
    <property type="evidence" value="ECO:0000303"/>
    <property type="project" value="ComplexPortal"/>
</dbReference>
<dbReference type="GO" id="GO:0006790">
    <property type="term" value="P:sulfur compound metabolic process"/>
    <property type="evidence" value="ECO:0000316"/>
    <property type="project" value="EcoliWiki"/>
</dbReference>
<dbReference type="CDD" id="cd13557">
    <property type="entry name" value="PBP2_SsuA"/>
    <property type="match status" value="1"/>
</dbReference>
<dbReference type="FunFam" id="3.40.190.10:FF:000050">
    <property type="entry name" value="Sulfonate ABC transporter substrate-binding protein"/>
    <property type="match status" value="1"/>
</dbReference>
<dbReference type="Gene3D" id="3.40.190.10">
    <property type="entry name" value="Periplasmic binding protein-like II"/>
    <property type="match status" value="2"/>
</dbReference>
<dbReference type="InterPro" id="IPR010067">
    <property type="entry name" value="ABC_SsuA_sub-bd"/>
</dbReference>
<dbReference type="InterPro" id="IPR001638">
    <property type="entry name" value="Solute-binding_3/MltF_N"/>
</dbReference>
<dbReference type="InterPro" id="IPR015168">
    <property type="entry name" value="SsuA/THI5"/>
</dbReference>
<dbReference type="NCBIfam" id="NF008588">
    <property type="entry name" value="PRK11553.1"/>
    <property type="match status" value="1"/>
</dbReference>
<dbReference type="NCBIfam" id="TIGR01728">
    <property type="entry name" value="SsuA_fam"/>
    <property type="match status" value="1"/>
</dbReference>
<dbReference type="PANTHER" id="PTHR30024">
    <property type="entry name" value="ALIPHATIC SULFONATES-BINDING PROTEIN-RELATED"/>
    <property type="match status" value="1"/>
</dbReference>
<dbReference type="PANTHER" id="PTHR30024:SF42">
    <property type="entry name" value="ALIPHATIC SULFONATES-BINDING PROTEIN-RELATED"/>
    <property type="match status" value="1"/>
</dbReference>
<dbReference type="Pfam" id="PF09084">
    <property type="entry name" value="NMT1"/>
    <property type="match status" value="1"/>
</dbReference>
<dbReference type="SMART" id="SM00062">
    <property type="entry name" value="PBPb"/>
    <property type="match status" value="1"/>
</dbReference>
<dbReference type="SUPFAM" id="SSF53850">
    <property type="entry name" value="Periplasmic binding protein-like II"/>
    <property type="match status" value="1"/>
</dbReference>
<keyword id="KW-0002">3D-structure</keyword>
<keyword id="KW-0574">Periplasm</keyword>
<keyword id="KW-1185">Reference proteome</keyword>
<keyword id="KW-0732">Signal</keyword>
<keyword id="KW-0813">Transport</keyword>